<name>JDP_BOMMO</name>
<sequence>MTGVDEILNYQRNPDDDYYALLGCDENSTVEQITAEYKILALQHHPDKNDGEKEAEMKFQKLKEAKEILCDPSKRALYDKWRRSGIAMGFKQWLGMKDHVQQSMHWSKPNTKDRMLEGDGSKPSGPSSLGPSNPATRRASEGGAALWGRWGTGNQEPPSEVLSKFRNYEI</sequence>
<accession>Q9U6V7</accession>
<gene>
    <name type="primary">jdp</name>
</gene>
<dbReference type="EMBL" id="AF176014">
    <property type="protein sequence ID" value="AAD52652.1"/>
    <property type="molecule type" value="mRNA"/>
</dbReference>
<dbReference type="RefSeq" id="NP_001037016.1">
    <property type="nucleotide sequence ID" value="NM_001043551.1"/>
</dbReference>
<dbReference type="SMR" id="Q9U6V7"/>
<dbReference type="FunCoup" id="Q9U6V7">
    <property type="interactions" value="213"/>
</dbReference>
<dbReference type="STRING" id="7091.Q9U6V7"/>
<dbReference type="PaxDb" id="7091-BGIBMGA010387-TA"/>
<dbReference type="EnsemblMetazoa" id="NM_001043551.1">
    <property type="protein sequence ID" value="NP_001037016.1"/>
    <property type="gene ID" value="GeneID_692566"/>
</dbReference>
<dbReference type="GeneID" id="692566"/>
<dbReference type="KEGG" id="bmor:692566"/>
<dbReference type="CTD" id="43630"/>
<dbReference type="eggNOG" id="KOG0691">
    <property type="taxonomic scope" value="Eukaryota"/>
</dbReference>
<dbReference type="HOGENOM" id="CLU_118857_0_0_1"/>
<dbReference type="InParanoid" id="Q9U6V7"/>
<dbReference type="OrthoDB" id="333255at7088"/>
<dbReference type="Proteomes" id="UP000005204">
    <property type="component" value="Unassembled WGS sequence"/>
</dbReference>
<dbReference type="GO" id="GO:0005737">
    <property type="term" value="C:cytoplasm"/>
    <property type="evidence" value="ECO:0007669"/>
    <property type="project" value="TreeGrafter"/>
</dbReference>
<dbReference type="CDD" id="cd06257">
    <property type="entry name" value="DnaJ"/>
    <property type="match status" value="1"/>
</dbReference>
<dbReference type="FunFam" id="1.10.287.110:FF:000049">
    <property type="entry name" value="DnaJ homolog subfamily C member 12"/>
    <property type="match status" value="1"/>
</dbReference>
<dbReference type="Gene3D" id="1.10.287.110">
    <property type="entry name" value="DnaJ domain"/>
    <property type="match status" value="1"/>
</dbReference>
<dbReference type="InterPro" id="IPR001623">
    <property type="entry name" value="DnaJ_domain"/>
</dbReference>
<dbReference type="InterPro" id="IPR036869">
    <property type="entry name" value="J_dom_sf"/>
</dbReference>
<dbReference type="InterPro" id="IPR029827">
    <property type="entry name" value="JDP1-like"/>
</dbReference>
<dbReference type="PANTHER" id="PTHR44500">
    <property type="entry name" value="DNAJ HOMOLOG SUBFAMILY C MEMBER 12"/>
    <property type="match status" value="1"/>
</dbReference>
<dbReference type="PANTHER" id="PTHR44500:SF1">
    <property type="entry name" value="DNAJ HOMOLOG SUBFAMILY C MEMBER 12"/>
    <property type="match status" value="1"/>
</dbReference>
<dbReference type="Pfam" id="PF00226">
    <property type="entry name" value="DnaJ"/>
    <property type="match status" value="1"/>
</dbReference>
<dbReference type="PRINTS" id="PR00625">
    <property type="entry name" value="JDOMAIN"/>
</dbReference>
<dbReference type="SMART" id="SM00271">
    <property type="entry name" value="DnaJ"/>
    <property type="match status" value="1"/>
</dbReference>
<dbReference type="SUPFAM" id="SSF46565">
    <property type="entry name" value="Chaperone J-domain"/>
    <property type="match status" value="1"/>
</dbReference>
<dbReference type="PROSITE" id="PS50076">
    <property type="entry name" value="DNAJ_2"/>
    <property type="match status" value="1"/>
</dbReference>
<organism>
    <name type="scientific">Bombyx mori</name>
    <name type="common">Silk moth</name>
    <dbReference type="NCBI Taxonomy" id="7091"/>
    <lineage>
        <taxon>Eukaryota</taxon>
        <taxon>Metazoa</taxon>
        <taxon>Ecdysozoa</taxon>
        <taxon>Arthropoda</taxon>
        <taxon>Hexapoda</taxon>
        <taxon>Insecta</taxon>
        <taxon>Pterygota</taxon>
        <taxon>Neoptera</taxon>
        <taxon>Endopterygota</taxon>
        <taxon>Lepidoptera</taxon>
        <taxon>Glossata</taxon>
        <taxon>Ditrysia</taxon>
        <taxon>Bombycoidea</taxon>
        <taxon>Bombycidae</taxon>
        <taxon>Bombycinae</taxon>
        <taxon>Bombyx</taxon>
    </lineage>
</organism>
<protein>
    <recommendedName>
        <fullName>J domain-containing protein</fullName>
    </recommendedName>
</protein>
<proteinExistence type="evidence at transcript level"/>
<feature type="chain" id="PRO_0000071069" description="J domain-containing protein">
    <location>
        <begin position="1"/>
        <end position="170"/>
    </location>
</feature>
<feature type="domain" description="J" evidence="1">
    <location>
        <begin position="17"/>
        <end position="82"/>
    </location>
</feature>
<feature type="region of interest" description="Disordered" evidence="2">
    <location>
        <begin position="101"/>
        <end position="170"/>
    </location>
</feature>
<feature type="compositionally biased region" description="Basic and acidic residues" evidence="2">
    <location>
        <begin position="110"/>
        <end position="120"/>
    </location>
</feature>
<feature type="compositionally biased region" description="Low complexity" evidence="2">
    <location>
        <begin position="121"/>
        <end position="134"/>
    </location>
</feature>
<evidence type="ECO:0000255" key="1">
    <source>
        <dbReference type="PROSITE-ProRule" id="PRU00286"/>
    </source>
</evidence>
<evidence type="ECO:0000256" key="2">
    <source>
        <dbReference type="SAM" id="MobiDB-lite"/>
    </source>
</evidence>
<keyword id="KW-0143">Chaperone</keyword>
<keyword id="KW-1185">Reference proteome</keyword>
<reference key="1">
    <citation type="journal article" date="2000" name="Biochim. Biophys. Acta">
        <title>Characterization of JDP genes, an evolutionarily conserved J domain-only protein family, from human and moths.</title>
        <authorList>
            <person name="Lee J."/>
            <person name="Hahn Y."/>
            <person name="Yun J.H."/>
            <person name="Mita K."/>
            <person name="Chung J.H."/>
        </authorList>
    </citation>
    <scope>NUCLEOTIDE SEQUENCE [MRNA]</scope>
</reference>